<proteinExistence type="inferred from homology"/>
<evidence type="ECO:0000255" key="1">
    <source>
        <dbReference type="HAMAP-Rule" id="MF_01643"/>
    </source>
</evidence>
<protein>
    <recommendedName>
        <fullName evidence="1">Formate-dependent phosphoribosylglycinamide formyltransferase</fullName>
        <ecNumber evidence="1">6.3.1.21</ecNumber>
    </recommendedName>
    <alternativeName>
        <fullName evidence="1">5'-phosphoribosylglycinamide transformylase 2</fullName>
    </alternativeName>
    <alternativeName>
        <fullName evidence="1">Formate-dependent GAR transformylase</fullName>
    </alternativeName>
    <alternativeName>
        <fullName evidence="1">GAR transformylase 2</fullName>
        <shortName evidence="1">GART 2</shortName>
    </alternativeName>
    <alternativeName>
        <fullName evidence="1">Non-folate glycinamide ribonucleotide transformylase</fullName>
    </alternativeName>
    <alternativeName>
        <fullName evidence="1">Phosphoribosylglycinamide formyltransferase 2</fullName>
    </alternativeName>
</protein>
<keyword id="KW-0067">ATP-binding</keyword>
<keyword id="KW-0436">Ligase</keyword>
<keyword id="KW-0460">Magnesium</keyword>
<keyword id="KW-0479">Metal-binding</keyword>
<keyword id="KW-0547">Nucleotide-binding</keyword>
<keyword id="KW-0658">Purine biosynthesis</keyword>
<keyword id="KW-1185">Reference proteome</keyword>
<organism>
    <name type="scientific">Nitratidesulfovibrio vulgaris (strain ATCC 29579 / DSM 644 / CCUG 34227 / NCIMB 8303 / VKM B-1760 / Hildenborough)</name>
    <name type="common">Desulfovibrio vulgaris</name>
    <dbReference type="NCBI Taxonomy" id="882"/>
    <lineage>
        <taxon>Bacteria</taxon>
        <taxon>Pseudomonadati</taxon>
        <taxon>Thermodesulfobacteriota</taxon>
        <taxon>Desulfovibrionia</taxon>
        <taxon>Desulfovibrionales</taxon>
        <taxon>Desulfovibrionaceae</taxon>
        <taxon>Nitratidesulfovibrio</taxon>
    </lineage>
</organism>
<accession>Q72E56</accession>
<name>PURT_NITV2</name>
<sequence length="393" mass="41958">MASIGTPLTPTATRILLLGSGELGREVALEAMRLGVEVVAVDRYPNAPAMQVAHRSHVVSMLDGAALRAIIEAEKPYCIVPEIEAIATGTLLELEQEGYRVVPTARAARLTMDREGIRRLAAEELGLPTSPYRFASTEEEYRAAIETVGLPCVVKPVMSSSGKGQSLVRTPADIDSAWAYAQTGGRAGAGRVIVEGFVDFDYEITLLTVRHAGGVTFCDPIGHLQKDGDYRESWQPQPMDAVALEKARAMADAVTGALGGWGIFGVELFVRGDEVWFSEVSPRPHDTGLVTLISQNMSEFALHVRAILGLPVPLLRQNGPAASCVILAEGDSEAPRFHGVDAALAEQDTALCLFGKPEVHGRRRMGVALALGDDIDAARAKARRAAGSVTVEL</sequence>
<reference key="1">
    <citation type="journal article" date="2004" name="Nat. Biotechnol.">
        <title>The genome sequence of the anaerobic, sulfate-reducing bacterium Desulfovibrio vulgaris Hildenborough.</title>
        <authorList>
            <person name="Heidelberg J.F."/>
            <person name="Seshadri R."/>
            <person name="Haveman S.A."/>
            <person name="Hemme C.L."/>
            <person name="Paulsen I.T."/>
            <person name="Kolonay J.F."/>
            <person name="Eisen J.A."/>
            <person name="Ward N.L."/>
            <person name="Methe B.A."/>
            <person name="Brinkac L.M."/>
            <person name="Daugherty S.C."/>
            <person name="DeBoy R.T."/>
            <person name="Dodson R.J."/>
            <person name="Durkin A.S."/>
            <person name="Madupu R."/>
            <person name="Nelson W.C."/>
            <person name="Sullivan S.A."/>
            <person name="Fouts D.E."/>
            <person name="Haft D.H."/>
            <person name="Selengut J."/>
            <person name="Peterson J.D."/>
            <person name="Davidsen T.M."/>
            <person name="Zafar N."/>
            <person name="Zhou L."/>
            <person name="Radune D."/>
            <person name="Dimitrov G."/>
            <person name="Hance M."/>
            <person name="Tran K."/>
            <person name="Khouri H.M."/>
            <person name="Gill J."/>
            <person name="Utterback T.R."/>
            <person name="Feldblyum T.V."/>
            <person name="Wall J.D."/>
            <person name="Voordouw G."/>
            <person name="Fraser C.M."/>
        </authorList>
    </citation>
    <scope>NUCLEOTIDE SEQUENCE [LARGE SCALE GENOMIC DNA]</scope>
    <source>
        <strain>ATCC 29579 / DSM 644 / CCUG 34227 / NCIMB 8303 / VKM B-1760 / Hildenborough</strain>
    </source>
</reference>
<dbReference type="EC" id="6.3.1.21" evidence="1"/>
<dbReference type="EMBL" id="AE017285">
    <property type="protein sequence ID" value="AAS95203.1"/>
    <property type="molecule type" value="Genomic_DNA"/>
</dbReference>
<dbReference type="RefSeq" id="WP_010938024.1">
    <property type="nucleotide sequence ID" value="NC_002937.3"/>
</dbReference>
<dbReference type="RefSeq" id="YP_009944.1">
    <property type="nucleotide sequence ID" value="NC_002937.3"/>
</dbReference>
<dbReference type="SMR" id="Q72E56"/>
<dbReference type="STRING" id="882.DVU_0723"/>
<dbReference type="PaxDb" id="882-DVU_0723"/>
<dbReference type="EnsemblBacteria" id="AAS95203">
    <property type="protein sequence ID" value="AAS95203"/>
    <property type="gene ID" value="DVU_0723"/>
</dbReference>
<dbReference type="KEGG" id="dvu:DVU_0723"/>
<dbReference type="PATRIC" id="fig|882.5.peg.680"/>
<dbReference type="eggNOG" id="COG0027">
    <property type="taxonomic scope" value="Bacteria"/>
</dbReference>
<dbReference type="HOGENOM" id="CLU_011534_1_3_7"/>
<dbReference type="OrthoDB" id="9804625at2"/>
<dbReference type="PhylomeDB" id="Q72E56"/>
<dbReference type="UniPathway" id="UPA00074">
    <property type="reaction ID" value="UER00127"/>
</dbReference>
<dbReference type="Proteomes" id="UP000002194">
    <property type="component" value="Chromosome"/>
</dbReference>
<dbReference type="GO" id="GO:0005829">
    <property type="term" value="C:cytosol"/>
    <property type="evidence" value="ECO:0007669"/>
    <property type="project" value="TreeGrafter"/>
</dbReference>
<dbReference type="GO" id="GO:0005524">
    <property type="term" value="F:ATP binding"/>
    <property type="evidence" value="ECO:0007669"/>
    <property type="project" value="UniProtKB-UniRule"/>
</dbReference>
<dbReference type="GO" id="GO:0000287">
    <property type="term" value="F:magnesium ion binding"/>
    <property type="evidence" value="ECO:0007669"/>
    <property type="project" value="InterPro"/>
</dbReference>
<dbReference type="GO" id="GO:0043815">
    <property type="term" value="F:phosphoribosylglycinamide formyltransferase 2 activity"/>
    <property type="evidence" value="ECO:0007669"/>
    <property type="project" value="UniProtKB-UniRule"/>
</dbReference>
<dbReference type="GO" id="GO:0004644">
    <property type="term" value="F:phosphoribosylglycinamide formyltransferase activity"/>
    <property type="evidence" value="ECO:0007669"/>
    <property type="project" value="InterPro"/>
</dbReference>
<dbReference type="GO" id="GO:0006189">
    <property type="term" value="P:'de novo' IMP biosynthetic process"/>
    <property type="evidence" value="ECO:0007669"/>
    <property type="project" value="UniProtKB-UniRule"/>
</dbReference>
<dbReference type="FunFam" id="3.30.1490.20:FF:000013">
    <property type="entry name" value="Formate-dependent phosphoribosylglycinamide formyltransferase"/>
    <property type="match status" value="1"/>
</dbReference>
<dbReference type="FunFam" id="3.30.470.20:FF:000027">
    <property type="entry name" value="Formate-dependent phosphoribosylglycinamide formyltransferase"/>
    <property type="match status" value="1"/>
</dbReference>
<dbReference type="FunFam" id="3.40.50.20:FF:000007">
    <property type="entry name" value="Formate-dependent phosphoribosylglycinamide formyltransferase"/>
    <property type="match status" value="1"/>
</dbReference>
<dbReference type="Gene3D" id="3.40.50.20">
    <property type="match status" value="1"/>
</dbReference>
<dbReference type="Gene3D" id="3.30.1490.20">
    <property type="entry name" value="ATP-grasp fold, A domain"/>
    <property type="match status" value="1"/>
</dbReference>
<dbReference type="Gene3D" id="3.30.470.20">
    <property type="entry name" value="ATP-grasp fold, B domain"/>
    <property type="match status" value="1"/>
</dbReference>
<dbReference type="HAMAP" id="MF_01643">
    <property type="entry name" value="PurT"/>
    <property type="match status" value="1"/>
</dbReference>
<dbReference type="InterPro" id="IPR011761">
    <property type="entry name" value="ATP-grasp"/>
</dbReference>
<dbReference type="InterPro" id="IPR003135">
    <property type="entry name" value="ATP-grasp_carboxylate-amine"/>
</dbReference>
<dbReference type="InterPro" id="IPR013815">
    <property type="entry name" value="ATP_grasp_subdomain_1"/>
</dbReference>
<dbReference type="InterPro" id="IPR016185">
    <property type="entry name" value="PreATP-grasp_dom_sf"/>
</dbReference>
<dbReference type="InterPro" id="IPR005862">
    <property type="entry name" value="PurT"/>
</dbReference>
<dbReference type="InterPro" id="IPR054350">
    <property type="entry name" value="PurT/PurK_preATP-grasp"/>
</dbReference>
<dbReference type="InterPro" id="IPR048740">
    <property type="entry name" value="PurT_C"/>
</dbReference>
<dbReference type="InterPro" id="IPR011054">
    <property type="entry name" value="Rudment_hybrid_motif"/>
</dbReference>
<dbReference type="NCBIfam" id="NF006766">
    <property type="entry name" value="PRK09288.1"/>
    <property type="match status" value="1"/>
</dbReference>
<dbReference type="NCBIfam" id="TIGR01142">
    <property type="entry name" value="purT"/>
    <property type="match status" value="1"/>
</dbReference>
<dbReference type="PANTHER" id="PTHR43055">
    <property type="entry name" value="FORMATE-DEPENDENT PHOSPHORIBOSYLGLYCINAMIDE FORMYLTRANSFERASE"/>
    <property type="match status" value="1"/>
</dbReference>
<dbReference type="PANTHER" id="PTHR43055:SF1">
    <property type="entry name" value="FORMATE-DEPENDENT PHOSPHORIBOSYLGLYCINAMIDE FORMYLTRANSFERASE"/>
    <property type="match status" value="1"/>
</dbReference>
<dbReference type="Pfam" id="PF02222">
    <property type="entry name" value="ATP-grasp"/>
    <property type="match status" value="1"/>
</dbReference>
<dbReference type="Pfam" id="PF21244">
    <property type="entry name" value="PurT_C"/>
    <property type="match status" value="1"/>
</dbReference>
<dbReference type="Pfam" id="PF22660">
    <property type="entry name" value="RS_preATP-grasp-like"/>
    <property type="match status" value="1"/>
</dbReference>
<dbReference type="SUPFAM" id="SSF56059">
    <property type="entry name" value="Glutathione synthetase ATP-binding domain-like"/>
    <property type="match status" value="1"/>
</dbReference>
<dbReference type="SUPFAM" id="SSF52440">
    <property type="entry name" value="PreATP-grasp domain"/>
    <property type="match status" value="1"/>
</dbReference>
<dbReference type="SUPFAM" id="SSF51246">
    <property type="entry name" value="Rudiment single hybrid motif"/>
    <property type="match status" value="1"/>
</dbReference>
<dbReference type="PROSITE" id="PS50975">
    <property type="entry name" value="ATP_GRASP"/>
    <property type="match status" value="1"/>
</dbReference>
<comment type="function">
    <text evidence="1">Involved in the de novo purine biosynthesis. Catalyzes the transfer of formate to 5-phospho-ribosyl-glycinamide (GAR), producing 5-phospho-ribosyl-N-formylglycinamide (FGAR). Formate is provided by PurU via hydrolysis of 10-formyl-tetrahydrofolate.</text>
</comment>
<comment type="catalytic activity">
    <reaction evidence="1">
        <text>N(1)-(5-phospho-beta-D-ribosyl)glycinamide + formate + ATP = N(2)-formyl-N(1)-(5-phospho-beta-D-ribosyl)glycinamide + ADP + phosphate + H(+)</text>
        <dbReference type="Rhea" id="RHEA:24829"/>
        <dbReference type="ChEBI" id="CHEBI:15378"/>
        <dbReference type="ChEBI" id="CHEBI:15740"/>
        <dbReference type="ChEBI" id="CHEBI:30616"/>
        <dbReference type="ChEBI" id="CHEBI:43474"/>
        <dbReference type="ChEBI" id="CHEBI:143788"/>
        <dbReference type="ChEBI" id="CHEBI:147286"/>
        <dbReference type="ChEBI" id="CHEBI:456216"/>
        <dbReference type="EC" id="6.3.1.21"/>
    </reaction>
    <physiologicalReaction direction="left-to-right" evidence="1">
        <dbReference type="Rhea" id="RHEA:24830"/>
    </physiologicalReaction>
</comment>
<comment type="pathway">
    <text evidence="1">Purine metabolism; IMP biosynthesis via de novo pathway; N(2)-formyl-N(1)-(5-phospho-D-ribosyl)glycinamide from N(1)-(5-phospho-D-ribosyl)glycinamide (formate route): step 1/1.</text>
</comment>
<comment type="subunit">
    <text evidence="1">Homodimer.</text>
</comment>
<comment type="similarity">
    <text evidence="1">Belongs to the PurK/PurT family.</text>
</comment>
<gene>
    <name evidence="1" type="primary">purT</name>
    <name type="ordered locus">DVU_0723</name>
</gene>
<feature type="chain" id="PRO_0000319157" description="Formate-dependent phosphoribosylglycinamide formyltransferase">
    <location>
        <begin position="1"/>
        <end position="393"/>
    </location>
</feature>
<feature type="domain" description="ATP-grasp" evidence="1">
    <location>
        <begin position="119"/>
        <end position="308"/>
    </location>
</feature>
<feature type="binding site" evidence="1">
    <location>
        <begin position="22"/>
        <end position="23"/>
    </location>
    <ligand>
        <name>N(1)-(5-phospho-beta-D-ribosyl)glycinamide</name>
        <dbReference type="ChEBI" id="CHEBI:143788"/>
    </ligand>
</feature>
<feature type="binding site" evidence="1">
    <location>
        <position position="82"/>
    </location>
    <ligand>
        <name>N(1)-(5-phospho-beta-D-ribosyl)glycinamide</name>
        <dbReference type="ChEBI" id="CHEBI:143788"/>
    </ligand>
</feature>
<feature type="binding site" evidence="1">
    <location>
        <position position="114"/>
    </location>
    <ligand>
        <name>ATP</name>
        <dbReference type="ChEBI" id="CHEBI:30616"/>
    </ligand>
</feature>
<feature type="binding site" evidence="1">
    <location>
        <position position="155"/>
    </location>
    <ligand>
        <name>ATP</name>
        <dbReference type="ChEBI" id="CHEBI:30616"/>
    </ligand>
</feature>
<feature type="binding site" evidence="1">
    <location>
        <begin position="160"/>
        <end position="165"/>
    </location>
    <ligand>
        <name>ATP</name>
        <dbReference type="ChEBI" id="CHEBI:30616"/>
    </ligand>
</feature>
<feature type="binding site" evidence="1">
    <location>
        <begin position="195"/>
        <end position="198"/>
    </location>
    <ligand>
        <name>ATP</name>
        <dbReference type="ChEBI" id="CHEBI:30616"/>
    </ligand>
</feature>
<feature type="binding site" evidence="1">
    <location>
        <position position="203"/>
    </location>
    <ligand>
        <name>ATP</name>
        <dbReference type="ChEBI" id="CHEBI:30616"/>
    </ligand>
</feature>
<feature type="binding site" evidence="1">
    <location>
        <position position="267"/>
    </location>
    <ligand>
        <name>Mg(2+)</name>
        <dbReference type="ChEBI" id="CHEBI:18420"/>
    </ligand>
</feature>
<feature type="binding site" evidence="1">
    <location>
        <position position="279"/>
    </location>
    <ligand>
        <name>Mg(2+)</name>
        <dbReference type="ChEBI" id="CHEBI:18420"/>
    </ligand>
</feature>
<feature type="binding site" evidence="1">
    <location>
        <position position="286"/>
    </location>
    <ligand>
        <name>N(1)-(5-phospho-beta-D-ribosyl)glycinamide</name>
        <dbReference type="ChEBI" id="CHEBI:143788"/>
    </ligand>
</feature>
<feature type="binding site" evidence="1">
    <location>
        <position position="356"/>
    </location>
    <ligand>
        <name>N(1)-(5-phospho-beta-D-ribosyl)glycinamide</name>
        <dbReference type="ChEBI" id="CHEBI:143788"/>
    </ligand>
</feature>
<feature type="binding site" evidence="1">
    <location>
        <begin position="363"/>
        <end position="364"/>
    </location>
    <ligand>
        <name>N(1)-(5-phospho-beta-D-ribosyl)glycinamide</name>
        <dbReference type="ChEBI" id="CHEBI:143788"/>
    </ligand>
</feature>